<feature type="chain" id="PRO_1000149671" description="tRNA (guanine-N(7)-)-methyltransferase">
    <location>
        <begin position="1"/>
        <end position="239"/>
    </location>
</feature>
<feature type="active site" evidence="1">
    <location>
        <position position="143"/>
    </location>
</feature>
<feature type="binding site" evidence="2">
    <location>
        <position position="68"/>
    </location>
    <ligand>
        <name>S-adenosyl-L-methionine</name>
        <dbReference type="ChEBI" id="CHEBI:59789"/>
    </ligand>
</feature>
<feature type="binding site" evidence="2">
    <location>
        <position position="93"/>
    </location>
    <ligand>
        <name>S-adenosyl-L-methionine</name>
        <dbReference type="ChEBI" id="CHEBI:59789"/>
    </ligand>
</feature>
<feature type="binding site" evidence="2">
    <location>
        <position position="120"/>
    </location>
    <ligand>
        <name>S-adenosyl-L-methionine</name>
        <dbReference type="ChEBI" id="CHEBI:59789"/>
    </ligand>
</feature>
<feature type="binding site" evidence="2">
    <location>
        <position position="143"/>
    </location>
    <ligand>
        <name>S-adenosyl-L-methionine</name>
        <dbReference type="ChEBI" id="CHEBI:59789"/>
    </ligand>
</feature>
<feature type="binding site" evidence="2">
    <location>
        <position position="147"/>
    </location>
    <ligand>
        <name>substrate</name>
    </ligand>
</feature>
<feature type="binding site" evidence="2">
    <location>
        <position position="180"/>
    </location>
    <ligand>
        <name>substrate</name>
    </ligand>
</feature>
<feature type="binding site" evidence="2">
    <location>
        <begin position="217"/>
        <end position="220"/>
    </location>
    <ligand>
        <name>substrate</name>
    </ligand>
</feature>
<proteinExistence type="inferred from homology"/>
<comment type="function">
    <text evidence="2">Catalyzes the formation of N(7)-methylguanine at position 46 (m7G46) in tRNA.</text>
</comment>
<comment type="catalytic activity">
    <reaction evidence="2">
        <text>guanosine(46) in tRNA + S-adenosyl-L-methionine = N(7)-methylguanosine(46) in tRNA + S-adenosyl-L-homocysteine</text>
        <dbReference type="Rhea" id="RHEA:42708"/>
        <dbReference type="Rhea" id="RHEA-COMP:10188"/>
        <dbReference type="Rhea" id="RHEA-COMP:10189"/>
        <dbReference type="ChEBI" id="CHEBI:57856"/>
        <dbReference type="ChEBI" id="CHEBI:59789"/>
        <dbReference type="ChEBI" id="CHEBI:74269"/>
        <dbReference type="ChEBI" id="CHEBI:74480"/>
        <dbReference type="EC" id="2.1.1.33"/>
    </reaction>
</comment>
<comment type="pathway">
    <text evidence="2">tRNA modification; N(7)-methylguanine-tRNA biosynthesis.</text>
</comment>
<comment type="similarity">
    <text evidence="2">Belongs to the class I-like SAM-binding methyltransferase superfamily. TrmB family.</text>
</comment>
<organism>
    <name type="scientific">Vibrio cholerae serotype O1 (strain M66-2)</name>
    <dbReference type="NCBI Taxonomy" id="579112"/>
    <lineage>
        <taxon>Bacteria</taxon>
        <taxon>Pseudomonadati</taxon>
        <taxon>Pseudomonadota</taxon>
        <taxon>Gammaproteobacteria</taxon>
        <taxon>Vibrionales</taxon>
        <taxon>Vibrionaceae</taxon>
        <taxon>Vibrio</taxon>
    </lineage>
</organism>
<name>TRMB_VIBCM</name>
<accession>C3LRX0</accession>
<sequence length="239" mass="27315">MSEVITQEYTEDGKVLRRIRSFVRREGRLTKGQEAAMKECWPTMGIDYQPELLDWQQVFGNDNPVVLEIGFGMGASLVEMAKNAPEKNFLGIEVHSPGVGACLASAREAGVTNLRVMCHDAVEVFAHMIPDNSLHTLQLFFPDPWHKKRHHKRRIVQLEFAEMVRQKLMIGSGVFHMATDWENYAEHMVEVMNQAPGFANLATDGDYVPRPDERPLTKFEQRGHRLGHGVWDIKYQRTA</sequence>
<keyword id="KW-0489">Methyltransferase</keyword>
<keyword id="KW-0949">S-adenosyl-L-methionine</keyword>
<keyword id="KW-0808">Transferase</keyword>
<keyword id="KW-0819">tRNA processing</keyword>
<protein>
    <recommendedName>
        <fullName evidence="2">tRNA (guanine-N(7)-)-methyltransferase</fullName>
        <ecNumber evidence="2">2.1.1.33</ecNumber>
    </recommendedName>
    <alternativeName>
        <fullName evidence="2">tRNA (guanine(46)-N(7))-methyltransferase</fullName>
    </alternativeName>
    <alternativeName>
        <fullName evidence="2">tRNA(m7G46)-methyltransferase</fullName>
    </alternativeName>
</protein>
<reference key="1">
    <citation type="journal article" date="2008" name="PLoS ONE">
        <title>A recalibrated molecular clock and independent origins for the cholera pandemic clones.</title>
        <authorList>
            <person name="Feng L."/>
            <person name="Reeves P.R."/>
            <person name="Lan R."/>
            <person name="Ren Y."/>
            <person name="Gao C."/>
            <person name="Zhou Z."/>
            <person name="Ren Y."/>
            <person name="Cheng J."/>
            <person name="Wang W."/>
            <person name="Wang J."/>
            <person name="Qian W."/>
            <person name="Li D."/>
            <person name="Wang L."/>
        </authorList>
    </citation>
    <scope>NUCLEOTIDE SEQUENCE [LARGE SCALE GENOMIC DNA]</scope>
    <source>
        <strain>M66-2</strain>
    </source>
</reference>
<evidence type="ECO:0000250" key="1"/>
<evidence type="ECO:0000255" key="2">
    <source>
        <dbReference type="HAMAP-Rule" id="MF_01057"/>
    </source>
</evidence>
<dbReference type="EC" id="2.1.1.33" evidence="2"/>
<dbReference type="EMBL" id="CP001233">
    <property type="protein sequence ID" value="ACP04763.1"/>
    <property type="molecule type" value="Genomic_DNA"/>
</dbReference>
<dbReference type="RefSeq" id="WP_000005584.1">
    <property type="nucleotide sequence ID" value="NC_012578.1"/>
</dbReference>
<dbReference type="SMR" id="C3LRX0"/>
<dbReference type="KEGG" id="vcm:VCM66_0438"/>
<dbReference type="HOGENOM" id="CLU_050910_0_1_6"/>
<dbReference type="UniPathway" id="UPA00989"/>
<dbReference type="Proteomes" id="UP000001217">
    <property type="component" value="Chromosome I"/>
</dbReference>
<dbReference type="GO" id="GO:0043527">
    <property type="term" value="C:tRNA methyltransferase complex"/>
    <property type="evidence" value="ECO:0007669"/>
    <property type="project" value="TreeGrafter"/>
</dbReference>
<dbReference type="GO" id="GO:0008176">
    <property type="term" value="F:tRNA (guanine(46)-N7)-methyltransferase activity"/>
    <property type="evidence" value="ECO:0007669"/>
    <property type="project" value="UniProtKB-UniRule"/>
</dbReference>
<dbReference type="FunFam" id="3.40.50.150:FF:000024">
    <property type="entry name" value="tRNA (guanine-N(7)-)-methyltransferase"/>
    <property type="match status" value="1"/>
</dbReference>
<dbReference type="Gene3D" id="3.40.50.150">
    <property type="entry name" value="Vaccinia Virus protein VP39"/>
    <property type="match status" value="1"/>
</dbReference>
<dbReference type="HAMAP" id="MF_01057">
    <property type="entry name" value="tRNA_methyltr_TrmB"/>
    <property type="match status" value="1"/>
</dbReference>
<dbReference type="InterPro" id="IPR029063">
    <property type="entry name" value="SAM-dependent_MTases_sf"/>
</dbReference>
<dbReference type="InterPro" id="IPR003358">
    <property type="entry name" value="tRNA_(Gua-N-7)_MeTrfase_Trmb"/>
</dbReference>
<dbReference type="InterPro" id="IPR055361">
    <property type="entry name" value="tRNA_methyltr_TrmB_bact"/>
</dbReference>
<dbReference type="NCBIfam" id="TIGR00091">
    <property type="entry name" value="tRNA (guanosine(46)-N7)-methyltransferase TrmB"/>
    <property type="match status" value="1"/>
</dbReference>
<dbReference type="PANTHER" id="PTHR23417">
    <property type="entry name" value="3-DEOXY-D-MANNO-OCTULOSONIC-ACID TRANSFERASE/TRNA GUANINE-N 7 - -METHYLTRANSFERASE"/>
    <property type="match status" value="1"/>
</dbReference>
<dbReference type="PANTHER" id="PTHR23417:SF14">
    <property type="entry name" value="PENTACOTRIPEPTIDE-REPEAT REGION OF PRORP DOMAIN-CONTAINING PROTEIN"/>
    <property type="match status" value="1"/>
</dbReference>
<dbReference type="Pfam" id="PF02390">
    <property type="entry name" value="Methyltransf_4"/>
    <property type="match status" value="1"/>
</dbReference>
<dbReference type="SUPFAM" id="SSF53335">
    <property type="entry name" value="S-adenosyl-L-methionine-dependent methyltransferases"/>
    <property type="match status" value="1"/>
</dbReference>
<dbReference type="PROSITE" id="PS51625">
    <property type="entry name" value="SAM_MT_TRMB"/>
    <property type="match status" value="1"/>
</dbReference>
<gene>
    <name evidence="2" type="primary">trmB</name>
    <name type="ordered locus">VCM66_0438</name>
</gene>